<dbReference type="EMBL" id="CP000607">
    <property type="protein sequence ID" value="ABP37342.1"/>
    <property type="molecule type" value="Genomic_DNA"/>
</dbReference>
<dbReference type="SMR" id="A4SFT3"/>
<dbReference type="STRING" id="290318.Cvib_1330"/>
<dbReference type="KEGG" id="pvi:Cvib_1330"/>
<dbReference type="eggNOG" id="COG0211">
    <property type="taxonomic scope" value="Bacteria"/>
</dbReference>
<dbReference type="HOGENOM" id="CLU_095424_4_0_10"/>
<dbReference type="OrthoDB" id="9803474at2"/>
<dbReference type="GO" id="GO:1990904">
    <property type="term" value="C:ribonucleoprotein complex"/>
    <property type="evidence" value="ECO:0007669"/>
    <property type="project" value="UniProtKB-KW"/>
</dbReference>
<dbReference type="GO" id="GO:0005840">
    <property type="term" value="C:ribosome"/>
    <property type="evidence" value="ECO:0007669"/>
    <property type="project" value="UniProtKB-KW"/>
</dbReference>
<dbReference type="GO" id="GO:0003735">
    <property type="term" value="F:structural constituent of ribosome"/>
    <property type="evidence" value="ECO:0007669"/>
    <property type="project" value="InterPro"/>
</dbReference>
<dbReference type="GO" id="GO:0006412">
    <property type="term" value="P:translation"/>
    <property type="evidence" value="ECO:0007669"/>
    <property type="project" value="UniProtKB-UniRule"/>
</dbReference>
<dbReference type="FunFam" id="2.40.50.100:FF:000020">
    <property type="entry name" value="50S ribosomal protein L27"/>
    <property type="match status" value="1"/>
</dbReference>
<dbReference type="Gene3D" id="2.40.50.100">
    <property type="match status" value="1"/>
</dbReference>
<dbReference type="HAMAP" id="MF_00539">
    <property type="entry name" value="Ribosomal_bL27"/>
    <property type="match status" value="1"/>
</dbReference>
<dbReference type="InterPro" id="IPR001684">
    <property type="entry name" value="Ribosomal_bL27"/>
</dbReference>
<dbReference type="InterPro" id="IPR018261">
    <property type="entry name" value="Ribosomal_bL27_CS"/>
</dbReference>
<dbReference type="NCBIfam" id="TIGR00062">
    <property type="entry name" value="L27"/>
    <property type="match status" value="1"/>
</dbReference>
<dbReference type="PANTHER" id="PTHR15893:SF0">
    <property type="entry name" value="LARGE RIBOSOMAL SUBUNIT PROTEIN BL27M"/>
    <property type="match status" value="1"/>
</dbReference>
<dbReference type="PANTHER" id="PTHR15893">
    <property type="entry name" value="RIBOSOMAL PROTEIN L27"/>
    <property type="match status" value="1"/>
</dbReference>
<dbReference type="Pfam" id="PF01016">
    <property type="entry name" value="Ribosomal_L27"/>
    <property type="match status" value="1"/>
</dbReference>
<dbReference type="PRINTS" id="PR00063">
    <property type="entry name" value="RIBOSOMALL27"/>
</dbReference>
<dbReference type="SUPFAM" id="SSF110324">
    <property type="entry name" value="Ribosomal L27 protein-like"/>
    <property type="match status" value="1"/>
</dbReference>
<dbReference type="PROSITE" id="PS00831">
    <property type="entry name" value="RIBOSOMAL_L27"/>
    <property type="match status" value="1"/>
</dbReference>
<feature type="chain" id="PRO_1000081901" description="Large ribosomal subunit protein bL27">
    <location>
        <begin position="1"/>
        <end position="84"/>
    </location>
</feature>
<feature type="region of interest" description="Disordered" evidence="2">
    <location>
        <begin position="1"/>
        <end position="21"/>
    </location>
</feature>
<reference key="1">
    <citation type="submission" date="2007-03" db="EMBL/GenBank/DDBJ databases">
        <title>Complete sequence of Prosthecochloris vibrioformis DSM 265.</title>
        <authorList>
            <consortium name="US DOE Joint Genome Institute"/>
            <person name="Copeland A."/>
            <person name="Lucas S."/>
            <person name="Lapidus A."/>
            <person name="Barry K."/>
            <person name="Detter J.C."/>
            <person name="Glavina del Rio T."/>
            <person name="Hammon N."/>
            <person name="Israni S."/>
            <person name="Pitluck S."/>
            <person name="Schmutz J."/>
            <person name="Larimer F."/>
            <person name="Land M."/>
            <person name="Hauser L."/>
            <person name="Mikhailova N."/>
            <person name="Li T."/>
            <person name="Overmann J."/>
            <person name="Schuster S.C."/>
            <person name="Bryant D.A."/>
            <person name="Richardson P."/>
        </authorList>
    </citation>
    <scope>NUCLEOTIDE SEQUENCE [LARGE SCALE GENOMIC DNA]</scope>
    <source>
        <strain>DSM 265 / 1930</strain>
    </source>
</reference>
<proteinExistence type="inferred from homology"/>
<keyword id="KW-0687">Ribonucleoprotein</keyword>
<keyword id="KW-0689">Ribosomal protein</keyword>
<name>RL27_CHLPM</name>
<sequence length="84" mass="8726">MAHKKGGGSTKNGRDSNPKYLGVKAAGGSTVAAGTIILRQRGTVIKPGVNAGIGRDHTIFALEDGVVTFRNGRNNKKQVDIIAP</sequence>
<comment type="similarity">
    <text evidence="1">Belongs to the bacterial ribosomal protein bL27 family.</text>
</comment>
<evidence type="ECO:0000255" key="1">
    <source>
        <dbReference type="HAMAP-Rule" id="MF_00539"/>
    </source>
</evidence>
<evidence type="ECO:0000256" key="2">
    <source>
        <dbReference type="SAM" id="MobiDB-lite"/>
    </source>
</evidence>
<evidence type="ECO:0000305" key="3"/>
<accession>A4SFT3</accession>
<gene>
    <name evidence="1" type="primary">rpmA</name>
    <name type="ordered locus">Cvib_1330</name>
</gene>
<protein>
    <recommendedName>
        <fullName evidence="1">Large ribosomal subunit protein bL27</fullName>
    </recommendedName>
    <alternativeName>
        <fullName evidence="3">50S ribosomal protein L27</fullName>
    </alternativeName>
</protein>
<organism>
    <name type="scientific">Chlorobium phaeovibrioides (strain DSM 265 / 1930)</name>
    <name type="common">Prosthecochloris vibrioformis (strain DSM 265)</name>
    <dbReference type="NCBI Taxonomy" id="290318"/>
    <lineage>
        <taxon>Bacteria</taxon>
        <taxon>Pseudomonadati</taxon>
        <taxon>Chlorobiota</taxon>
        <taxon>Chlorobiia</taxon>
        <taxon>Chlorobiales</taxon>
        <taxon>Chlorobiaceae</taxon>
        <taxon>Chlorobium/Pelodictyon group</taxon>
        <taxon>Chlorobium</taxon>
    </lineage>
</organism>